<keyword id="KW-0010">Activator</keyword>
<keyword id="KW-0963">Cytoplasm</keyword>
<keyword id="KW-0238">DNA-binding</keyword>
<keyword id="KW-0597">Phosphoprotein</keyword>
<keyword id="KW-0678">Repressor</keyword>
<keyword id="KW-0804">Transcription</keyword>
<keyword id="KW-0805">Transcription regulation</keyword>
<keyword id="KW-0902">Two-component regulatory system</keyword>
<keyword id="KW-0843">Virulence</keyword>
<protein>
    <recommendedName>
        <fullName>Response regulator ArlR</fullName>
    </recommendedName>
</protein>
<evidence type="ECO:0000250" key="1"/>
<evidence type="ECO:0000255" key="2">
    <source>
        <dbReference type="PROSITE-ProRule" id="PRU00169"/>
    </source>
</evidence>
<evidence type="ECO:0000255" key="3">
    <source>
        <dbReference type="PROSITE-ProRule" id="PRU01091"/>
    </source>
</evidence>
<accession>Q2FH23</accession>
<comment type="function">
    <text evidence="1">Member of the two-component regulatory system ArlS/ArlR involved in the regulation of adhesion, autolysis, multidrug resistance and virulence.</text>
</comment>
<comment type="subcellular location">
    <subcellularLocation>
        <location evidence="1">Cytoplasm</location>
    </subcellularLocation>
</comment>
<comment type="PTM">
    <text evidence="1">Phosphorylated by ArlS.</text>
</comment>
<feature type="chain" id="PRO_0000293442" description="Response regulator ArlR">
    <location>
        <begin position="1"/>
        <end position="219"/>
    </location>
</feature>
<feature type="domain" description="Response regulatory" evidence="2">
    <location>
        <begin position="3"/>
        <end position="116"/>
    </location>
</feature>
<feature type="DNA-binding region" description="OmpR/PhoB-type" evidence="3">
    <location>
        <begin position="122"/>
        <end position="219"/>
    </location>
</feature>
<feature type="modified residue" description="4-aspartylphosphate" evidence="2">
    <location>
        <position position="52"/>
    </location>
</feature>
<dbReference type="EMBL" id="CP000255">
    <property type="protein sequence ID" value="ABD21962.1"/>
    <property type="molecule type" value="Genomic_DNA"/>
</dbReference>
<dbReference type="RefSeq" id="WP_000192137.1">
    <property type="nucleotide sequence ID" value="NZ_CP027476.1"/>
</dbReference>
<dbReference type="SMR" id="Q2FH23"/>
<dbReference type="KEGG" id="saa:SAUSA300_1308"/>
<dbReference type="HOGENOM" id="CLU_000445_30_1_9"/>
<dbReference type="OMA" id="SYPRRVW"/>
<dbReference type="Proteomes" id="UP000001939">
    <property type="component" value="Chromosome"/>
</dbReference>
<dbReference type="GO" id="GO:0005829">
    <property type="term" value="C:cytosol"/>
    <property type="evidence" value="ECO:0007669"/>
    <property type="project" value="TreeGrafter"/>
</dbReference>
<dbReference type="GO" id="GO:0032993">
    <property type="term" value="C:protein-DNA complex"/>
    <property type="evidence" value="ECO:0007669"/>
    <property type="project" value="TreeGrafter"/>
</dbReference>
<dbReference type="GO" id="GO:0000156">
    <property type="term" value="F:phosphorelay response regulator activity"/>
    <property type="evidence" value="ECO:0007669"/>
    <property type="project" value="TreeGrafter"/>
</dbReference>
<dbReference type="GO" id="GO:0000976">
    <property type="term" value="F:transcription cis-regulatory region binding"/>
    <property type="evidence" value="ECO:0007669"/>
    <property type="project" value="TreeGrafter"/>
</dbReference>
<dbReference type="GO" id="GO:0006355">
    <property type="term" value="P:regulation of DNA-templated transcription"/>
    <property type="evidence" value="ECO:0007669"/>
    <property type="project" value="InterPro"/>
</dbReference>
<dbReference type="CDD" id="cd00383">
    <property type="entry name" value="trans_reg_C"/>
    <property type="match status" value="1"/>
</dbReference>
<dbReference type="FunFam" id="3.40.50.2300:FF:000001">
    <property type="entry name" value="DNA-binding response regulator PhoB"/>
    <property type="match status" value="1"/>
</dbReference>
<dbReference type="FunFam" id="1.10.10.10:FF:000005">
    <property type="entry name" value="Two-component system response regulator"/>
    <property type="match status" value="1"/>
</dbReference>
<dbReference type="Gene3D" id="3.40.50.2300">
    <property type="match status" value="1"/>
</dbReference>
<dbReference type="Gene3D" id="6.10.250.690">
    <property type="match status" value="1"/>
</dbReference>
<dbReference type="Gene3D" id="1.10.10.10">
    <property type="entry name" value="Winged helix-like DNA-binding domain superfamily/Winged helix DNA-binding domain"/>
    <property type="match status" value="1"/>
</dbReference>
<dbReference type="InterPro" id="IPR011006">
    <property type="entry name" value="CheY-like_superfamily"/>
</dbReference>
<dbReference type="InterPro" id="IPR001867">
    <property type="entry name" value="OmpR/PhoB-type_DNA-bd"/>
</dbReference>
<dbReference type="InterPro" id="IPR016032">
    <property type="entry name" value="Sig_transdc_resp-reg_C-effctor"/>
</dbReference>
<dbReference type="InterPro" id="IPR001789">
    <property type="entry name" value="Sig_transdc_resp-reg_receiver"/>
</dbReference>
<dbReference type="InterPro" id="IPR039420">
    <property type="entry name" value="WalR-like"/>
</dbReference>
<dbReference type="InterPro" id="IPR036388">
    <property type="entry name" value="WH-like_DNA-bd_sf"/>
</dbReference>
<dbReference type="PANTHER" id="PTHR48111">
    <property type="entry name" value="REGULATOR OF RPOS"/>
    <property type="match status" value="1"/>
</dbReference>
<dbReference type="PANTHER" id="PTHR48111:SF22">
    <property type="entry name" value="REGULATOR OF RPOS"/>
    <property type="match status" value="1"/>
</dbReference>
<dbReference type="Pfam" id="PF00072">
    <property type="entry name" value="Response_reg"/>
    <property type="match status" value="1"/>
</dbReference>
<dbReference type="Pfam" id="PF00486">
    <property type="entry name" value="Trans_reg_C"/>
    <property type="match status" value="1"/>
</dbReference>
<dbReference type="SMART" id="SM00448">
    <property type="entry name" value="REC"/>
    <property type="match status" value="1"/>
</dbReference>
<dbReference type="SMART" id="SM00862">
    <property type="entry name" value="Trans_reg_C"/>
    <property type="match status" value="1"/>
</dbReference>
<dbReference type="SUPFAM" id="SSF46894">
    <property type="entry name" value="C-terminal effector domain of the bipartite response regulators"/>
    <property type="match status" value="1"/>
</dbReference>
<dbReference type="SUPFAM" id="SSF52172">
    <property type="entry name" value="CheY-like"/>
    <property type="match status" value="1"/>
</dbReference>
<dbReference type="PROSITE" id="PS51755">
    <property type="entry name" value="OMPR_PHOB"/>
    <property type="match status" value="1"/>
</dbReference>
<dbReference type="PROSITE" id="PS50110">
    <property type="entry name" value="RESPONSE_REGULATORY"/>
    <property type="match status" value="1"/>
</dbReference>
<reference key="1">
    <citation type="journal article" date="2006" name="Lancet">
        <title>Complete genome sequence of USA300, an epidemic clone of community-acquired meticillin-resistant Staphylococcus aureus.</title>
        <authorList>
            <person name="Diep B.A."/>
            <person name="Gill S.R."/>
            <person name="Chang R.F."/>
            <person name="Phan T.H."/>
            <person name="Chen J.H."/>
            <person name="Davidson M.G."/>
            <person name="Lin F."/>
            <person name="Lin J."/>
            <person name="Carleton H.A."/>
            <person name="Mongodin E.F."/>
            <person name="Sensabaugh G.F."/>
            <person name="Perdreau-Remington F."/>
        </authorList>
    </citation>
    <scope>NUCLEOTIDE SEQUENCE [LARGE SCALE GENOMIC DNA]</scope>
    <source>
        <strain>USA300</strain>
    </source>
</reference>
<sequence length="219" mass="25498">MTQILIVEDEQNLARFLELELTHENYNVDTEYDGQDGLDKALSHYYDLIILDLMLPSINGLEICRKIRQQQSTPIIIITAKSDTYDKVAGLDYGADDYIVKPFDIEELLARIRAILRRQPQKDIIDVNGITIDKNAFKVTVNGAEIELTKTEYDLLYLLAENKNHVMQREQILNHVWGYNSEVETNVVDVYIRYLRNKLKPYDRDKMIETVRGVGYVIR</sequence>
<gene>
    <name type="primary">arlR</name>
    <name type="ordered locus">SAUSA300_1308</name>
</gene>
<proteinExistence type="inferred from homology"/>
<name>ARLR_STAA3</name>
<organism>
    <name type="scientific">Staphylococcus aureus (strain USA300)</name>
    <dbReference type="NCBI Taxonomy" id="367830"/>
    <lineage>
        <taxon>Bacteria</taxon>
        <taxon>Bacillati</taxon>
        <taxon>Bacillota</taxon>
        <taxon>Bacilli</taxon>
        <taxon>Bacillales</taxon>
        <taxon>Staphylococcaceae</taxon>
        <taxon>Staphylococcus</taxon>
    </lineage>
</organism>